<sequence>MKFAVIVFPGSNCDVDMFHAIKDELGEEVDYVWHDTENLDEYDAILLPGGFSYGDYLRCGAISRFANAMKAVQKAAEQGKPILGVCNGFQILVESGLLPGALMRNENLKFMCRTVQLRVENNETMFTSQYEKDEVINIPIAHGEGNYYCDEETLKKLEENNQIAFRYVENPNGSVSDIAGIVNEKGNVLGMMPHPERAVDELLGGAEGLKVFQSILKQWRETYVVNA</sequence>
<accession>B9J1K4</accession>
<reference key="1">
    <citation type="journal article" date="2009" name="J. Bacteriol.">
        <title>Complete genome sequence of the extremophilic Bacillus cereus strain Q1 with industrial applications.</title>
        <authorList>
            <person name="Xiong Z."/>
            <person name="Jiang Y."/>
            <person name="Qi D."/>
            <person name="Lu H."/>
            <person name="Yang F."/>
            <person name="Yang J."/>
            <person name="Chen L."/>
            <person name="Sun L."/>
            <person name="Xu X."/>
            <person name="Xue Y."/>
            <person name="Zhu Y."/>
            <person name="Jin Q."/>
        </authorList>
    </citation>
    <scope>NUCLEOTIDE SEQUENCE [LARGE SCALE GENOMIC DNA]</scope>
    <source>
        <strain>Q1</strain>
    </source>
</reference>
<gene>
    <name evidence="1" type="primary">purQ</name>
    <name type="ordered locus">BCQ_0345</name>
</gene>
<name>PURQ_BACCQ</name>
<keyword id="KW-0067">ATP-binding</keyword>
<keyword id="KW-0963">Cytoplasm</keyword>
<keyword id="KW-0315">Glutamine amidotransferase</keyword>
<keyword id="KW-0378">Hydrolase</keyword>
<keyword id="KW-0436">Ligase</keyword>
<keyword id="KW-0547">Nucleotide-binding</keyword>
<keyword id="KW-0658">Purine biosynthesis</keyword>
<feature type="chain" id="PRO_1000134913" description="Phosphoribosylformylglycinamidine synthase subunit PurQ">
    <location>
        <begin position="1"/>
        <end position="227"/>
    </location>
</feature>
<feature type="domain" description="Glutamine amidotransferase type-1" evidence="1">
    <location>
        <begin position="3"/>
        <end position="225"/>
    </location>
</feature>
<feature type="active site" description="Nucleophile" evidence="1">
    <location>
        <position position="86"/>
    </location>
</feature>
<feature type="active site" evidence="1">
    <location>
        <position position="194"/>
    </location>
</feature>
<feature type="active site" evidence="1">
    <location>
        <position position="196"/>
    </location>
</feature>
<organism>
    <name type="scientific">Bacillus cereus (strain Q1)</name>
    <dbReference type="NCBI Taxonomy" id="361100"/>
    <lineage>
        <taxon>Bacteria</taxon>
        <taxon>Bacillati</taxon>
        <taxon>Bacillota</taxon>
        <taxon>Bacilli</taxon>
        <taxon>Bacillales</taxon>
        <taxon>Bacillaceae</taxon>
        <taxon>Bacillus</taxon>
        <taxon>Bacillus cereus group</taxon>
    </lineage>
</organism>
<dbReference type="EC" id="6.3.5.3" evidence="1"/>
<dbReference type="EC" id="3.5.1.2" evidence="1"/>
<dbReference type="EMBL" id="CP000227">
    <property type="protein sequence ID" value="ACM10817.1"/>
    <property type="molecule type" value="Genomic_DNA"/>
</dbReference>
<dbReference type="SMR" id="B9J1K4"/>
<dbReference type="KEGG" id="bcq:BCQ_0345"/>
<dbReference type="HOGENOM" id="CLU_001031_3_1_9"/>
<dbReference type="UniPathway" id="UPA00074">
    <property type="reaction ID" value="UER00128"/>
</dbReference>
<dbReference type="Proteomes" id="UP000000441">
    <property type="component" value="Chromosome"/>
</dbReference>
<dbReference type="GO" id="GO:0005737">
    <property type="term" value="C:cytoplasm"/>
    <property type="evidence" value="ECO:0007669"/>
    <property type="project" value="UniProtKB-SubCell"/>
</dbReference>
<dbReference type="GO" id="GO:0005524">
    <property type="term" value="F:ATP binding"/>
    <property type="evidence" value="ECO:0007669"/>
    <property type="project" value="UniProtKB-KW"/>
</dbReference>
<dbReference type="GO" id="GO:0004359">
    <property type="term" value="F:glutaminase activity"/>
    <property type="evidence" value="ECO:0007669"/>
    <property type="project" value="UniProtKB-EC"/>
</dbReference>
<dbReference type="GO" id="GO:0004642">
    <property type="term" value="F:phosphoribosylformylglycinamidine synthase activity"/>
    <property type="evidence" value="ECO:0007669"/>
    <property type="project" value="UniProtKB-UniRule"/>
</dbReference>
<dbReference type="GO" id="GO:0006189">
    <property type="term" value="P:'de novo' IMP biosynthetic process"/>
    <property type="evidence" value="ECO:0007669"/>
    <property type="project" value="UniProtKB-UniRule"/>
</dbReference>
<dbReference type="CDD" id="cd01740">
    <property type="entry name" value="GATase1_FGAR_AT"/>
    <property type="match status" value="1"/>
</dbReference>
<dbReference type="FunFam" id="3.40.50.880:FF:000019">
    <property type="entry name" value="Phosphoribosylformylglycinamidine synthase subunit PurQ"/>
    <property type="match status" value="1"/>
</dbReference>
<dbReference type="Gene3D" id="3.40.50.880">
    <property type="match status" value="1"/>
</dbReference>
<dbReference type="HAMAP" id="MF_00421">
    <property type="entry name" value="PurQ"/>
    <property type="match status" value="1"/>
</dbReference>
<dbReference type="InterPro" id="IPR029062">
    <property type="entry name" value="Class_I_gatase-like"/>
</dbReference>
<dbReference type="InterPro" id="IPR010075">
    <property type="entry name" value="PRibForGlyAmidine_synth_PurQ"/>
</dbReference>
<dbReference type="NCBIfam" id="TIGR01737">
    <property type="entry name" value="FGAM_synth_I"/>
    <property type="match status" value="1"/>
</dbReference>
<dbReference type="NCBIfam" id="NF002957">
    <property type="entry name" value="PRK03619.1"/>
    <property type="match status" value="1"/>
</dbReference>
<dbReference type="PANTHER" id="PTHR47552">
    <property type="entry name" value="PHOSPHORIBOSYLFORMYLGLYCINAMIDINE SYNTHASE SUBUNIT PURQ"/>
    <property type="match status" value="1"/>
</dbReference>
<dbReference type="PANTHER" id="PTHR47552:SF1">
    <property type="entry name" value="PHOSPHORIBOSYLFORMYLGLYCINAMIDINE SYNTHASE SUBUNIT PURQ"/>
    <property type="match status" value="1"/>
</dbReference>
<dbReference type="Pfam" id="PF13507">
    <property type="entry name" value="GATase_5"/>
    <property type="match status" value="1"/>
</dbReference>
<dbReference type="PIRSF" id="PIRSF001586">
    <property type="entry name" value="FGAM_synth_I"/>
    <property type="match status" value="1"/>
</dbReference>
<dbReference type="SMART" id="SM01211">
    <property type="entry name" value="GATase_5"/>
    <property type="match status" value="1"/>
</dbReference>
<dbReference type="SUPFAM" id="SSF52317">
    <property type="entry name" value="Class I glutamine amidotransferase-like"/>
    <property type="match status" value="1"/>
</dbReference>
<dbReference type="PROSITE" id="PS51273">
    <property type="entry name" value="GATASE_TYPE_1"/>
    <property type="match status" value="1"/>
</dbReference>
<comment type="function">
    <text evidence="1">Part of the phosphoribosylformylglycinamidine synthase complex involved in the purines biosynthetic pathway. Catalyzes the ATP-dependent conversion of formylglycinamide ribonucleotide (FGAR) and glutamine to yield formylglycinamidine ribonucleotide (FGAM) and glutamate. The FGAM synthase complex is composed of three subunits. PurQ produces an ammonia molecule by converting glutamine to glutamate. PurL transfers the ammonia molecule to FGAR to form FGAM in an ATP-dependent manner. PurS interacts with PurQ and PurL and is thought to assist in the transfer of the ammonia molecule from PurQ to PurL.</text>
</comment>
<comment type="catalytic activity">
    <reaction evidence="1">
        <text>N(2)-formyl-N(1)-(5-phospho-beta-D-ribosyl)glycinamide + L-glutamine + ATP + H2O = 2-formamido-N(1)-(5-O-phospho-beta-D-ribosyl)acetamidine + L-glutamate + ADP + phosphate + H(+)</text>
        <dbReference type="Rhea" id="RHEA:17129"/>
        <dbReference type="ChEBI" id="CHEBI:15377"/>
        <dbReference type="ChEBI" id="CHEBI:15378"/>
        <dbReference type="ChEBI" id="CHEBI:29985"/>
        <dbReference type="ChEBI" id="CHEBI:30616"/>
        <dbReference type="ChEBI" id="CHEBI:43474"/>
        <dbReference type="ChEBI" id="CHEBI:58359"/>
        <dbReference type="ChEBI" id="CHEBI:147286"/>
        <dbReference type="ChEBI" id="CHEBI:147287"/>
        <dbReference type="ChEBI" id="CHEBI:456216"/>
        <dbReference type="EC" id="6.3.5.3"/>
    </reaction>
</comment>
<comment type="catalytic activity">
    <reaction evidence="1">
        <text>L-glutamine + H2O = L-glutamate + NH4(+)</text>
        <dbReference type="Rhea" id="RHEA:15889"/>
        <dbReference type="ChEBI" id="CHEBI:15377"/>
        <dbReference type="ChEBI" id="CHEBI:28938"/>
        <dbReference type="ChEBI" id="CHEBI:29985"/>
        <dbReference type="ChEBI" id="CHEBI:58359"/>
        <dbReference type="EC" id="3.5.1.2"/>
    </reaction>
</comment>
<comment type="pathway">
    <text evidence="1">Purine metabolism; IMP biosynthesis via de novo pathway; 5-amino-1-(5-phospho-D-ribosyl)imidazole from N(2)-formyl-N(1)-(5-phospho-D-ribosyl)glycinamide: step 1/2.</text>
</comment>
<comment type="subunit">
    <text evidence="1">Part of the FGAM synthase complex composed of 1 PurL, 1 PurQ and 2 PurS subunits.</text>
</comment>
<comment type="subcellular location">
    <subcellularLocation>
        <location evidence="1">Cytoplasm</location>
    </subcellularLocation>
</comment>
<proteinExistence type="inferred from homology"/>
<protein>
    <recommendedName>
        <fullName evidence="1">Phosphoribosylformylglycinamidine synthase subunit PurQ</fullName>
        <shortName evidence="1">FGAM synthase</shortName>
        <ecNumber evidence="1">6.3.5.3</ecNumber>
    </recommendedName>
    <alternativeName>
        <fullName evidence="1">Formylglycinamide ribonucleotide amidotransferase subunit I</fullName>
        <shortName evidence="1">FGAR amidotransferase I</shortName>
        <shortName evidence="1">FGAR-AT I</shortName>
    </alternativeName>
    <alternativeName>
        <fullName evidence="1">Glutaminase PurQ</fullName>
        <ecNumber evidence="1">3.5.1.2</ecNumber>
    </alternativeName>
    <alternativeName>
        <fullName evidence="1">Phosphoribosylformylglycinamidine synthase subunit I</fullName>
    </alternativeName>
</protein>
<evidence type="ECO:0000255" key="1">
    <source>
        <dbReference type="HAMAP-Rule" id="MF_00421"/>
    </source>
</evidence>